<keyword id="KW-0175">Coiled coil</keyword>
<keyword id="KW-0963">Cytoplasm</keyword>
<keyword id="KW-0479">Metal-binding</keyword>
<keyword id="KW-1185">Reference proteome</keyword>
<keyword id="KW-0677">Repeat</keyword>
<keyword id="KW-0862">Zinc</keyword>
<keyword id="KW-0863">Zinc-finger</keyword>
<dbReference type="EMBL" id="AAFI02000008">
    <property type="protein sequence ID" value="EAL71326.1"/>
    <property type="molecule type" value="Genomic_DNA"/>
</dbReference>
<dbReference type="RefSeq" id="XP_645161.1">
    <property type="nucleotide sequence ID" value="XM_640069.1"/>
</dbReference>
<dbReference type="SMR" id="Q86KX6"/>
<dbReference type="FunCoup" id="Q86KX6">
    <property type="interactions" value="2"/>
</dbReference>
<dbReference type="PaxDb" id="44689-DDB0206580"/>
<dbReference type="EnsemblProtists" id="EAL71326">
    <property type="protein sequence ID" value="EAL71326"/>
    <property type="gene ID" value="DDB_G0272348"/>
</dbReference>
<dbReference type="GeneID" id="8618332"/>
<dbReference type="KEGG" id="ddi:DDB_G0272348"/>
<dbReference type="dictyBase" id="DDB_G0272348">
    <property type="gene designation" value="trafI"/>
</dbReference>
<dbReference type="VEuPathDB" id="AmoebaDB:DDB_G0272348"/>
<dbReference type="eggNOG" id="KOG0297">
    <property type="taxonomic scope" value="Eukaryota"/>
</dbReference>
<dbReference type="HOGENOM" id="CLU_040980_0_0_1"/>
<dbReference type="InParanoid" id="Q86KX6"/>
<dbReference type="PhylomeDB" id="Q86KX6"/>
<dbReference type="PRO" id="PR:Q86KX6"/>
<dbReference type="Proteomes" id="UP000002195">
    <property type="component" value="Chromosome 2"/>
</dbReference>
<dbReference type="GO" id="GO:0005737">
    <property type="term" value="C:cytoplasm"/>
    <property type="evidence" value="ECO:0000318"/>
    <property type="project" value="GO_Central"/>
</dbReference>
<dbReference type="GO" id="GO:0008270">
    <property type="term" value="F:zinc ion binding"/>
    <property type="evidence" value="ECO:0007669"/>
    <property type="project" value="UniProtKB-KW"/>
</dbReference>
<dbReference type="CDD" id="cd00121">
    <property type="entry name" value="MATH"/>
    <property type="match status" value="1"/>
</dbReference>
<dbReference type="Gene3D" id="2.60.210.10">
    <property type="entry name" value="Apoptosis, Tumor Necrosis Factor Receptor Associated Protein 2, Chain A"/>
    <property type="match status" value="1"/>
</dbReference>
<dbReference type="Gene3D" id="3.30.40.10">
    <property type="entry name" value="Zinc/RING finger domain, C3HC4 (zinc finger)"/>
    <property type="match status" value="2"/>
</dbReference>
<dbReference type="InterPro" id="IPR002083">
    <property type="entry name" value="MATH/TRAF_dom"/>
</dbReference>
<dbReference type="InterPro" id="IPR008974">
    <property type="entry name" value="TRAF-like"/>
</dbReference>
<dbReference type="InterPro" id="IPR013083">
    <property type="entry name" value="Znf_RING/FYVE/PHD"/>
</dbReference>
<dbReference type="InterPro" id="IPR001293">
    <property type="entry name" value="Znf_TRAF"/>
</dbReference>
<dbReference type="PANTHER" id="PTHR10131:SF65">
    <property type="entry name" value="RING FINGER PROTEIN DG17-RELATED"/>
    <property type="match status" value="1"/>
</dbReference>
<dbReference type="PANTHER" id="PTHR10131">
    <property type="entry name" value="TNF RECEPTOR ASSOCIATED FACTOR"/>
    <property type="match status" value="1"/>
</dbReference>
<dbReference type="Pfam" id="PF22486">
    <property type="entry name" value="MATH_2"/>
    <property type="match status" value="1"/>
</dbReference>
<dbReference type="Pfam" id="PF02176">
    <property type="entry name" value="zf-TRAF"/>
    <property type="match status" value="1"/>
</dbReference>
<dbReference type="SUPFAM" id="SSF49599">
    <property type="entry name" value="TRAF domain-like"/>
    <property type="match status" value="3"/>
</dbReference>
<dbReference type="PROSITE" id="PS50144">
    <property type="entry name" value="MATH"/>
    <property type="match status" value="1"/>
</dbReference>
<dbReference type="PROSITE" id="PS50145">
    <property type="entry name" value="ZF_TRAF"/>
    <property type="match status" value="1"/>
</dbReference>
<evidence type="ECO:0000250" key="1"/>
<evidence type="ECO:0000255" key="2"/>
<evidence type="ECO:0000255" key="3">
    <source>
        <dbReference type="PROSITE-ProRule" id="PRU00129"/>
    </source>
</evidence>
<evidence type="ECO:0000255" key="4">
    <source>
        <dbReference type="PROSITE-ProRule" id="PRU00207"/>
    </source>
</evidence>
<evidence type="ECO:0000256" key="5">
    <source>
        <dbReference type="SAM" id="MobiDB-lite"/>
    </source>
</evidence>
<evidence type="ECO:0000305" key="6"/>
<comment type="function">
    <text evidence="1">Probable adapter protein and signal transducer that links members of the tumor necrosis factor receptor family to different signaling pathways by association with the receptor cytoplasmic domain and kinases.</text>
</comment>
<comment type="subcellular location">
    <subcellularLocation>
        <location evidence="1">Cytoplasm</location>
    </subcellularLocation>
</comment>
<comment type="domain">
    <text>The MATH/TRAF domain binds to receptor cytoplasmic domains.</text>
</comment>
<comment type="similarity">
    <text evidence="6">Belongs to the TNF receptor-associated factor family. A subfamily.</text>
</comment>
<feature type="chain" id="PRO_0000393761" description="TNF receptor-associated factor family protein DDB_G0272348">
    <location>
        <begin position="1"/>
        <end position="595"/>
    </location>
</feature>
<feature type="domain" description="MATH" evidence="3">
    <location>
        <begin position="456"/>
        <end position="584"/>
    </location>
</feature>
<feature type="zinc finger region" description="RING-type; degenerate">
    <location>
        <begin position="87"/>
        <end position="134"/>
    </location>
</feature>
<feature type="zinc finger region" description="TRAF-type 1" evidence="4">
    <location>
        <begin position="189"/>
        <end position="253"/>
    </location>
</feature>
<feature type="zinc finger region" description="TRAF-type 2" evidence="4">
    <location>
        <begin position="254"/>
        <end position="311"/>
    </location>
</feature>
<feature type="region of interest" description="Disordered" evidence="5">
    <location>
        <begin position="14"/>
        <end position="64"/>
    </location>
</feature>
<feature type="region of interest" description="Disordered" evidence="5">
    <location>
        <begin position="409"/>
        <end position="450"/>
    </location>
</feature>
<feature type="coiled-coil region" evidence="2">
    <location>
        <begin position="348"/>
        <end position="410"/>
    </location>
</feature>
<feature type="compositionally biased region" description="Low complexity" evidence="5">
    <location>
        <begin position="17"/>
        <end position="64"/>
    </location>
</feature>
<feature type="compositionally biased region" description="Low complexity" evidence="5">
    <location>
        <begin position="409"/>
        <end position="440"/>
    </location>
</feature>
<feature type="compositionally biased region" description="Polar residues" evidence="5">
    <location>
        <begin position="441"/>
        <end position="450"/>
    </location>
</feature>
<accession>Q86KX6</accession>
<accession>Q55A23</accession>
<proteinExistence type="inferred from homology"/>
<protein>
    <recommendedName>
        <fullName>TNF receptor-associated factor family protein DDB_G0272348</fullName>
    </recommendedName>
</protein>
<organism>
    <name type="scientific">Dictyostelium discoideum</name>
    <name type="common">Social amoeba</name>
    <dbReference type="NCBI Taxonomy" id="44689"/>
    <lineage>
        <taxon>Eukaryota</taxon>
        <taxon>Amoebozoa</taxon>
        <taxon>Evosea</taxon>
        <taxon>Eumycetozoa</taxon>
        <taxon>Dictyostelia</taxon>
        <taxon>Dictyosteliales</taxon>
        <taxon>Dictyosteliaceae</taxon>
        <taxon>Dictyostelium</taxon>
    </lineage>
</organism>
<gene>
    <name type="ORF">DDB_G0272348</name>
</gene>
<name>Y2348_DICDI</name>
<sequence length="595" mass="69161">MEFELEDITIEQSSFTNNNSNNNNNNNNNSNSNNNNNNNNNNINNNNNHNNNNKNNSNNKNEINNQLDIPISNLVVDKENISKKYFCTICSDLLVNSFHADKFKAVQCKNGHYTTCLNCWEKHLEKKKNCIQCGVDVESIESLSSNLLVTQKFTTFKIHCPNSFFDTIDFIKDEVNGCKEIIQINELEEHLKECQYGFISCKNCEEFSKLPFQEFTQCPDFRKNTKEQHDLICPYVKISCEYCGDIINKINKESHNANWCQEITIKCLDCHLPFKKKEINQHQKSFCPETIIQCRYSKGGCNAMIRRSKLSQHLTEGDNHHQFISNILNQQDLKINELELKNTEFCLLLNGQNKKITELEILFKELNDSILIQKQQQKQQQQQQQQQQQQQQQQQQQQQSQQQQSQQQQQSQQQQQSQQSQQNNNSNSHFINNNNNNINNVQMSDSPNGGSLPQAVYKNKWVISNYSEQEQQGISKDYIKSPLFKIGNSTFFLKWFPFGKKKLNYCSIFLYKTQDDKSIIVNYYIHLVNNQISDEVYEKRGCQKYDSENGSAGYGSSQFIKRADLLNDANGFLINDSITIEIEIFATEEILPLQS</sequence>
<reference key="1">
    <citation type="journal article" date="2002" name="Nature">
        <title>Sequence and analysis of chromosome 2 of Dictyostelium discoideum.</title>
        <authorList>
            <person name="Gloeckner G."/>
            <person name="Eichinger L."/>
            <person name="Szafranski K."/>
            <person name="Pachebat J.A."/>
            <person name="Bankier A.T."/>
            <person name="Dear P.H."/>
            <person name="Lehmann R."/>
            <person name="Baumgart C."/>
            <person name="Parra G."/>
            <person name="Abril J.F."/>
            <person name="Guigo R."/>
            <person name="Kumpf K."/>
            <person name="Tunggal B."/>
            <person name="Cox E.C."/>
            <person name="Quail M.A."/>
            <person name="Platzer M."/>
            <person name="Rosenthal A."/>
            <person name="Noegel A.A."/>
        </authorList>
    </citation>
    <scope>NUCLEOTIDE SEQUENCE [LARGE SCALE GENOMIC DNA]</scope>
    <source>
        <strain>AX4</strain>
    </source>
</reference>
<reference key="2">
    <citation type="journal article" date="2005" name="Nature">
        <title>The genome of the social amoeba Dictyostelium discoideum.</title>
        <authorList>
            <person name="Eichinger L."/>
            <person name="Pachebat J.A."/>
            <person name="Gloeckner G."/>
            <person name="Rajandream M.A."/>
            <person name="Sucgang R."/>
            <person name="Berriman M."/>
            <person name="Song J."/>
            <person name="Olsen R."/>
            <person name="Szafranski K."/>
            <person name="Xu Q."/>
            <person name="Tunggal B."/>
            <person name="Kummerfeld S."/>
            <person name="Madera M."/>
            <person name="Konfortov B.A."/>
            <person name="Rivero F."/>
            <person name="Bankier A.T."/>
            <person name="Lehmann R."/>
            <person name="Hamlin N."/>
            <person name="Davies R."/>
            <person name="Gaudet P."/>
            <person name="Fey P."/>
            <person name="Pilcher K."/>
            <person name="Chen G."/>
            <person name="Saunders D."/>
            <person name="Sodergren E.J."/>
            <person name="Davis P."/>
            <person name="Kerhornou A."/>
            <person name="Nie X."/>
            <person name="Hall N."/>
            <person name="Anjard C."/>
            <person name="Hemphill L."/>
            <person name="Bason N."/>
            <person name="Farbrother P."/>
            <person name="Desany B."/>
            <person name="Just E."/>
            <person name="Morio T."/>
            <person name="Rost R."/>
            <person name="Churcher C.M."/>
            <person name="Cooper J."/>
            <person name="Haydock S."/>
            <person name="van Driessche N."/>
            <person name="Cronin A."/>
            <person name="Goodhead I."/>
            <person name="Muzny D.M."/>
            <person name="Mourier T."/>
            <person name="Pain A."/>
            <person name="Lu M."/>
            <person name="Harper D."/>
            <person name="Lindsay R."/>
            <person name="Hauser H."/>
            <person name="James K.D."/>
            <person name="Quiles M."/>
            <person name="Madan Babu M."/>
            <person name="Saito T."/>
            <person name="Buchrieser C."/>
            <person name="Wardroper A."/>
            <person name="Felder M."/>
            <person name="Thangavelu M."/>
            <person name="Johnson D."/>
            <person name="Knights A."/>
            <person name="Loulseged H."/>
            <person name="Mungall K.L."/>
            <person name="Oliver K."/>
            <person name="Price C."/>
            <person name="Quail M.A."/>
            <person name="Urushihara H."/>
            <person name="Hernandez J."/>
            <person name="Rabbinowitsch E."/>
            <person name="Steffen D."/>
            <person name="Sanders M."/>
            <person name="Ma J."/>
            <person name="Kohara Y."/>
            <person name="Sharp S."/>
            <person name="Simmonds M.N."/>
            <person name="Spiegler S."/>
            <person name="Tivey A."/>
            <person name="Sugano S."/>
            <person name="White B."/>
            <person name="Walker D."/>
            <person name="Woodward J.R."/>
            <person name="Winckler T."/>
            <person name="Tanaka Y."/>
            <person name="Shaulsky G."/>
            <person name="Schleicher M."/>
            <person name="Weinstock G.M."/>
            <person name="Rosenthal A."/>
            <person name="Cox E.C."/>
            <person name="Chisholm R.L."/>
            <person name="Gibbs R.A."/>
            <person name="Loomis W.F."/>
            <person name="Platzer M."/>
            <person name="Kay R.R."/>
            <person name="Williams J.G."/>
            <person name="Dear P.H."/>
            <person name="Noegel A.A."/>
            <person name="Barrell B.G."/>
            <person name="Kuspa A."/>
        </authorList>
    </citation>
    <scope>NUCLEOTIDE SEQUENCE [LARGE SCALE GENOMIC DNA]</scope>
    <source>
        <strain>AX4</strain>
    </source>
</reference>